<proteinExistence type="inferred from homology"/>
<keyword id="KW-0648">Protein biosynthesis</keyword>
<keyword id="KW-0808">Transferase</keyword>
<gene>
    <name evidence="1" type="primary">fmt</name>
    <name type="ordered locus">RAF_ORF0258</name>
</gene>
<dbReference type="EC" id="2.1.2.9" evidence="1"/>
<dbReference type="EMBL" id="CP001612">
    <property type="protein sequence ID" value="ACP53210.1"/>
    <property type="molecule type" value="Genomic_DNA"/>
</dbReference>
<dbReference type="RefSeq" id="WP_010976939.1">
    <property type="nucleotide sequence ID" value="NC_012633.1"/>
</dbReference>
<dbReference type="SMR" id="C3PMQ0"/>
<dbReference type="GeneID" id="927898"/>
<dbReference type="KEGG" id="raf:RAF_ORF0258"/>
<dbReference type="HOGENOM" id="CLU_033347_1_1_5"/>
<dbReference type="Proteomes" id="UP000002305">
    <property type="component" value="Chromosome"/>
</dbReference>
<dbReference type="GO" id="GO:0005829">
    <property type="term" value="C:cytosol"/>
    <property type="evidence" value="ECO:0007669"/>
    <property type="project" value="TreeGrafter"/>
</dbReference>
<dbReference type="GO" id="GO:0004479">
    <property type="term" value="F:methionyl-tRNA formyltransferase activity"/>
    <property type="evidence" value="ECO:0007669"/>
    <property type="project" value="UniProtKB-UniRule"/>
</dbReference>
<dbReference type="CDD" id="cd08646">
    <property type="entry name" value="FMT_core_Met-tRNA-FMT_N"/>
    <property type="match status" value="1"/>
</dbReference>
<dbReference type="CDD" id="cd08704">
    <property type="entry name" value="Met_tRNA_FMT_C"/>
    <property type="match status" value="1"/>
</dbReference>
<dbReference type="Gene3D" id="3.40.50.12230">
    <property type="match status" value="1"/>
</dbReference>
<dbReference type="HAMAP" id="MF_00182">
    <property type="entry name" value="Formyl_trans"/>
    <property type="match status" value="1"/>
</dbReference>
<dbReference type="InterPro" id="IPR005794">
    <property type="entry name" value="Fmt"/>
</dbReference>
<dbReference type="InterPro" id="IPR005793">
    <property type="entry name" value="Formyl_trans_C"/>
</dbReference>
<dbReference type="InterPro" id="IPR002376">
    <property type="entry name" value="Formyl_transf_N"/>
</dbReference>
<dbReference type="InterPro" id="IPR036477">
    <property type="entry name" value="Formyl_transf_N_sf"/>
</dbReference>
<dbReference type="InterPro" id="IPR011034">
    <property type="entry name" value="Formyl_transferase-like_C_sf"/>
</dbReference>
<dbReference type="InterPro" id="IPR044135">
    <property type="entry name" value="Met-tRNA-FMT_C"/>
</dbReference>
<dbReference type="InterPro" id="IPR041711">
    <property type="entry name" value="Met-tRNA-FMT_N"/>
</dbReference>
<dbReference type="NCBIfam" id="TIGR00460">
    <property type="entry name" value="fmt"/>
    <property type="match status" value="1"/>
</dbReference>
<dbReference type="PANTHER" id="PTHR11138">
    <property type="entry name" value="METHIONYL-TRNA FORMYLTRANSFERASE"/>
    <property type="match status" value="1"/>
</dbReference>
<dbReference type="PANTHER" id="PTHR11138:SF5">
    <property type="entry name" value="METHIONYL-TRNA FORMYLTRANSFERASE, MITOCHONDRIAL"/>
    <property type="match status" value="1"/>
</dbReference>
<dbReference type="Pfam" id="PF02911">
    <property type="entry name" value="Formyl_trans_C"/>
    <property type="match status" value="1"/>
</dbReference>
<dbReference type="Pfam" id="PF00551">
    <property type="entry name" value="Formyl_trans_N"/>
    <property type="match status" value="1"/>
</dbReference>
<dbReference type="SUPFAM" id="SSF50486">
    <property type="entry name" value="FMT C-terminal domain-like"/>
    <property type="match status" value="1"/>
</dbReference>
<dbReference type="SUPFAM" id="SSF53328">
    <property type="entry name" value="Formyltransferase"/>
    <property type="match status" value="1"/>
</dbReference>
<reference key="1">
    <citation type="journal article" date="2009" name="BMC Genomics">
        <title>Analysis of the Rickettsia africae genome reveals that virulence acquisition in Rickettsia species may be explained by genome reduction.</title>
        <authorList>
            <person name="Fournier P.-E."/>
            <person name="El Karkouri K."/>
            <person name="Leroy Q."/>
            <person name="Robert C."/>
            <person name="Giumelli B."/>
            <person name="Renesto P."/>
            <person name="Socolovschi C."/>
            <person name="Parola P."/>
            <person name="Audic S."/>
            <person name="Raoult D."/>
        </authorList>
    </citation>
    <scope>NUCLEOTIDE SEQUENCE [LARGE SCALE GENOMIC DNA]</scope>
    <source>
        <strain>ESF-5</strain>
    </source>
</reference>
<organism>
    <name type="scientific">Rickettsia africae (strain ESF-5)</name>
    <dbReference type="NCBI Taxonomy" id="347255"/>
    <lineage>
        <taxon>Bacteria</taxon>
        <taxon>Pseudomonadati</taxon>
        <taxon>Pseudomonadota</taxon>
        <taxon>Alphaproteobacteria</taxon>
        <taxon>Rickettsiales</taxon>
        <taxon>Rickettsiaceae</taxon>
        <taxon>Rickettsieae</taxon>
        <taxon>Rickettsia</taxon>
        <taxon>spotted fever group</taxon>
    </lineage>
</organism>
<feature type="chain" id="PRO_1000203874" description="Methionyl-tRNA formyltransferase">
    <location>
        <begin position="1"/>
        <end position="303"/>
    </location>
</feature>
<feature type="binding site" evidence="1">
    <location>
        <begin position="108"/>
        <end position="111"/>
    </location>
    <ligand>
        <name>(6S)-5,6,7,8-tetrahydrofolate</name>
        <dbReference type="ChEBI" id="CHEBI:57453"/>
    </ligand>
</feature>
<comment type="function">
    <text evidence="1">Attaches a formyl group to the free amino group of methionyl-tRNA(fMet). The formyl group appears to play a dual role in the initiator identity of N-formylmethionyl-tRNA by promoting its recognition by IF2 and preventing the misappropriation of this tRNA by the elongation apparatus.</text>
</comment>
<comment type="catalytic activity">
    <reaction evidence="1">
        <text>L-methionyl-tRNA(fMet) + (6R)-10-formyltetrahydrofolate = N-formyl-L-methionyl-tRNA(fMet) + (6S)-5,6,7,8-tetrahydrofolate + H(+)</text>
        <dbReference type="Rhea" id="RHEA:24380"/>
        <dbReference type="Rhea" id="RHEA-COMP:9952"/>
        <dbReference type="Rhea" id="RHEA-COMP:9953"/>
        <dbReference type="ChEBI" id="CHEBI:15378"/>
        <dbReference type="ChEBI" id="CHEBI:57453"/>
        <dbReference type="ChEBI" id="CHEBI:78530"/>
        <dbReference type="ChEBI" id="CHEBI:78844"/>
        <dbReference type="ChEBI" id="CHEBI:195366"/>
        <dbReference type="EC" id="2.1.2.9"/>
    </reaction>
</comment>
<comment type="similarity">
    <text evidence="1">Belongs to the Fmt family.</text>
</comment>
<evidence type="ECO:0000255" key="1">
    <source>
        <dbReference type="HAMAP-Rule" id="MF_00182"/>
    </source>
</evidence>
<name>FMT_RICAE</name>
<sequence>MKVIFMGTPEFAVPALKKLITHHEVKAVFTQQPKAKGRGLNLAKSPIHQLAFEHQIPVYTPSTLRNDEIINLINKVNADIIVVIAYGFIVPKAILEAKKYGCLNIHPSDLPRHRGAAPLQRTIIEGDRKSSVCIMRMDTGLDTGDILMKEDFDLEERITLEELHNKCANLGAELLIKTLANIDNIVPITQPSDGVTYAHKLTKEEGKINWHESAYKIDCKIRGMNPWPGAYFSYNDKIIKILEAEYLNADHHFTSGTVISDKLEIACGSGILRVKKLQQESKKALNIEEFLRGTNILKDTVLK</sequence>
<accession>C3PMQ0</accession>
<protein>
    <recommendedName>
        <fullName evidence="1">Methionyl-tRNA formyltransferase</fullName>
        <ecNumber evidence="1">2.1.2.9</ecNumber>
    </recommendedName>
</protein>